<reference evidence="13" key="1">
    <citation type="journal article" date="1998" name="Science">
        <title>Genome sequence of the nematode C. elegans: a platform for investigating biology.</title>
        <authorList>
            <consortium name="The C. elegans sequencing consortium"/>
        </authorList>
    </citation>
    <scope>NUCLEOTIDE SEQUENCE [LARGE SCALE GENOMIC DNA]</scope>
    <source>
        <strain evidence="13">Bristol N2</strain>
    </source>
</reference>
<reference evidence="11" key="2">
    <citation type="journal article" date="2006" name="Cell">
        <title>Analysis of the C. elegans Argonaute family reveals that distinct Argonautes act sequentially during RNAi.</title>
        <authorList>
            <person name="Yigit E."/>
            <person name="Batista P.J."/>
            <person name="Bei Y."/>
            <person name="Pang K.M."/>
            <person name="Chen C.C."/>
            <person name="Tolia N.H."/>
            <person name="Joshua-Tor L."/>
            <person name="Mitani S."/>
            <person name="Simard M.J."/>
            <person name="Mello C.C."/>
        </authorList>
    </citation>
    <scope>FUNCTION</scope>
</reference>
<reference evidence="11" key="3">
    <citation type="journal article" date="2010" name="Proc. Natl. Acad. Sci. U.S.A.">
        <title>Sequential rounds of RNA-dependent RNA transcription drive endogenous small-RNA biogenesis in the ERGO-1/Argonaute pathway.</title>
        <authorList>
            <person name="Vasale J.J."/>
            <person name="Gu W."/>
            <person name="Thivierge C."/>
            <person name="Batista P.J."/>
            <person name="Claycomb J.M."/>
            <person name="Youngman E.M."/>
            <person name="Duchaine T.F."/>
            <person name="Mello C.C."/>
            <person name="Conte D. Jr."/>
        </authorList>
    </citation>
    <scope>FUNCTION</scope>
    <scope>DEVELOPMENTAL STAGE</scope>
</reference>
<reference evidence="11" key="4">
    <citation type="journal article" date="2011" name="PLoS Genet.">
        <title>The ERI-6/7 helicase acts at the first stage of an siRNA amplification pathway that targets recent gene duplications.</title>
        <authorList>
            <person name="Fischer S.E."/>
            <person name="Montgomery T.A."/>
            <person name="Zhang C."/>
            <person name="Fahlgren N."/>
            <person name="Breen P.C."/>
            <person name="Hwang A."/>
            <person name="Sullivan C.M."/>
            <person name="Carrington J.C."/>
            <person name="Ruvkun G."/>
        </authorList>
    </citation>
    <scope>FUNCTION</scope>
</reference>
<reference evidence="11" key="5">
    <citation type="journal article" date="2012" name="Curr. Biol.">
        <title>The Caenorhabditis elegans RDE-10/RDE-11 complex regulates RNAi by promoting secondary siRNA amplification.</title>
        <authorList>
            <person name="Zhang C."/>
            <person name="Montgomery T.A."/>
            <person name="Fischer S.E."/>
            <person name="Garcia S.M."/>
            <person name="Riedel C.G."/>
            <person name="Fahlgren N."/>
            <person name="Sullivan C.M."/>
            <person name="Carrington J.C."/>
            <person name="Ruvkun G."/>
        </authorList>
    </citation>
    <scope>INTERACTION WITH RDE-10</scope>
</reference>
<reference key="6">
    <citation type="journal article" date="2012" name="PLoS Genet.">
        <title>The Caenorhabditis elegans HEN1 ortholog, HENN-1, methylates and stabilizes select subclasses of germline small RNAs.</title>
        <authorList>
            <person name="Billi A.C."/>
            <person name="Alessi A.F."/>
            <person name="Khivansara V."/>
            <person name="Han T."/>
            <person name="Freeberg M."/>
            <person name="Mitani S."/>
            <person name="Kim J.K."/>
        </authorList>
    </citation>
    <scope>FUNCTION</scope>
    <scope>SUBCELLULAR LOCATION</scope>
    <scope>TISSUE SPECIFICITY</scope>
    <scope>DEVELOPMENTAL STAGE</scope>
</reference>
<reference evidence="11" key="7">
    <citation type="journal article" date="2014" name="Curr. Biol.">
        <title>The vasa homolog rde-12 engages target mRNA and multiple argonaute proteins to promote RNAi in C. elegans.</title>
        <authorList>
            <person name="Shirayama M."/>
            <person name="Stanney W."/>
            <person name="Gu W."/>
            <person name="Seth M."/>
            <person name="Mello C.C."/>
        </authorList>
    </citation>
    <scope>INTERACTION WITH RDE-12</scope>
</reference>
<dbReference type="EMBL" id="BX284605">
    <property type="protein sequence ID" value="CCD62622.1"/>
    <property type="molecule type" value="Genomic_DNA"/>
</dbReference>
<dbReference type="PIR" id="T33275">
    <property type="entry name" value="T33275"/>
</dbReference>
<dbReference type="RefSeq" id="NP_503362.2">
    <property type="nucleotide sequence ID" value="NM_070961.7"/>
</dbReference>
<dbReference type="SMR" id="O61931"/>
<dbReference type="FunCoup" id="O61931">
    <property type="interactions" value="95"/>
</dbReference>
<dbReference type="STRING" id="6239.R09A1.1a.1"/>
<dbReference type="PaxDb" id="6239-R09A1.1"/>
<dbReference type="PeptideAtlas" id="O61931"/>
<dbReference type="EnsemblMetazoa" id="R09A1.1a.1">
    <property type="protein sequence ID" value="R09A1.1a.1"/>
    <property type="gene ID" value="WBGene00019971"/>
</dbReference>
<dbReference type="GeneID" id="178602"/>
<dbReference type="KEGG" id="cel:CELE_R09A1.1"/>
<dbReference type="UCSC" id="R09A1.1">
    <property type="organism name" value="c. elegans"/>
</dbReference>
<dbReference type="AGR" id="WB:WBGene00019971"/>
<dbReference type="CTD" id="178602"/>
<dbReference type="WormBase" id="R09A1.1a">
    <property type="protein sequence ID" value="CE30106"/>
    <property type="gene ID" value="WBGene00019971"/>
    <property type="gene designation" value="ergo-1"/>
</dbReference>
<dbReference type="eggNOG" id="KOG1041">
    <property type="taxonomic scope" value="Eukaryota"/>
</dbReference>
<dbReference type="HOGENOM" id="CLU_004544_4_3_1"/>
<dbReference type="InParanoid" id="O61931"/>
<dbReference type="OMA" id="DRGHQDY"/>
<dbReference type="OrthoDB" id="5971213at2759"/>
<dbReference type="PhylomeDB" id="O61931"/>
<dbReference type="Reactome" id="R-CEL-203927">
    <property type="pathway name" value="MicroRNA (miRNA) biogenesis"/>
</dbReference>
<dbReference type="Reactome" id="R-CEL-426486">
    <property type="pathway name" value="Small interfering RNA (siRNA) biogenesis"/>
</dbReference>
<dbReference type="Reactome" id="R-CEL-5578749">
    <property type="pathway name" value="Transcriptional regulation by small RNAs"/>
</dbReference>
<dbReference type="PRO" id="PR:O61931"/>
<dbReference type="Proteomes" id="UP000001940">
    <property type="component" value="Chromosome V"/>
</dbReference>
<dbReference type="Bgee" id="WBGene00019971">
    <property type="expression patterns" value="Expressed in embryo and 4 other cell types or tissues"/>
</dbReference>
<dbReference type="ExpressionAtlas" id="O61931">
    <property type="expression patterns" value="baseline and differential"/>
</dbReference>
<dbReference type="GO" id="GO:0005737">
    <property type="term" value="C:cytoplasm"/>
    <property type="evidence" value="ECO:0000314"/>
    <property type="project" value="WormBase"/>
</dbReference>
<dbReference type="GO" id="GO:0036464">
    <property type="term" value="C:cytoplasmic ribonucleoprotein granule"/>
    <property type="evidence" value="ECO:0000318"/>
    <property type="project" value="GO_Central"/>
</dbReference>
<dbReference type="GO" id="GO:0005634">
    <property type="term" value="C:nucleus"/>
    <property type="evidence" value="ECO:0000318"/>
    <property type="project" value="GO_Central"/>
</dbReference>
<dbReference type="GO" id="GO:0016442">
    <property type="term" value="C:RISC complex"/>
    <property type="evidence" value="ECO:0000318"/>
    <property type="project" value="GO_Central"/>
</dbReference>
<dbReference type="GO" id="GO:0017151">
    <property type="term" value="F:DEAD/H-box RNA helicase binding"/>
    <property type="evidence" value="ECO:0000353"/>
    <property type="project" value="WormBase"/>
</dbReference>
<dbReference type="GO" id="GO:0035198">
    <property type="term" value="F:miRNA binding"/>
    <property type="evidence" value="ECO:0000318"/>
    <property type="project" value="GO_Central"/>
</dbReference>
<dbReference type="GO" id="GO:0004521">
    <property type="term" value="F:RNA endonuclease activity"/>
    <property type="evidence" value="ECO:0000318"/>
    <property type="project" value="GO_Central"/>
</dbReference>
<dbReference type="GO" id="GO:0003727">
    <property type="term" value="F:single-stranded RNA binding"/>
    <property type="evidence" value="ECO:0000318"/>
    <property type="project" value="GO_Central"/>
</dbReference>
<dbReference type="GO" id="GO:0035197">
    <property type="term" value="F:siRNA binding"/>
    <property type="evidence" value="ECO:0000314"/>
    <property type="project" value="UniProtKB"/>
</dbReference>
<dbReference type="GO" id="GO:0006417">
    <property type="term" value="P:regulation of translation"/>
    <property type="evidence" value="ECO:0007669"/>
    <property type="project" value="UniProtKB-KW"/>
</dbReference>
<dbReference type="GO" id="GO:0035194">
    <property type="term" value="P:regulatory ncRNA-mediated post-transcriptional gene silencing"/>
    <property type="evidence" value="ECO:0000315"/>
    <property type="project" value="WormBase"/>
</dbReference>
<dbReference type="GO" id="GO:0030422">
    <property type="term" value="P:siRNA processing"/>
    <property type="evidence" value="ECO:0000315"/>
    <property type="project" value="CACAO"/>
</dbReference>
<dbReference type="CDD" id="cd02846">
    <property type="entry name" value="PAZ_argonaute_like"/>
    <property type="match status" value="1"/>
</dbReference>
<dbReference type="CDD" id="cd04657">
    <property type="entry name" value="Piwi_ago-like"/>
    <property type="match status" value="1"/>
</dbReference>
<dbReference type="Gene3D" id="2.170.260.10">
    <property type="entry name" value="paz domain"/>
    <property type="match status" value="1"/>
</dbReference>
<dbReference type="Gene3D" id="3.30.420.10">
    <property type="entry name" value="Ribonuclease H-like superfamily/Ribonuclease H"/>
    <property type="match status" value="1"/>
</dbReference>
<dbReference type="InterPro" id="IPR003100">
    <property type="entry name" value="PAZ_dom"/>
</dbReference>
<dbReference type="InterPro" id="IPR036085">
    <property type="entry name" value="PAZ_dom_sf"/>
</dbReference>
<dbReference type="InterPro" id="IPR003165">
    <property type="entry name" value="Piwi"/>
</dbReference>
<dbReference type="InterPro" id="IPR045246">
    <property type="entry name" value="Piwi_ago-like"/>
</dbReference>
<dbReference type="InterPro" id="IPR012337">
    <property type="entry name" value="RNaseH-like_sf"/>
</dbReference>
<dbReference type="InterPro" id="IPR036397">
    <property type="entry name" value="RNaseH_sf"/>
</dbReference>
<dbReference type="PANTHER" id="PTHR22891">
    <property type="entry name" value="EUKARYOTIC TRANSLATION INITIATION FACTOR 2C"/>
    <property type="match status" value="1"/>
</dbReference>
<dbReference type="Pfam" id="PF02170">
    <property type="entry name" value="PAZ"/>
    <property type="match status" value="1"/>
</dbReference>
<dbReference type="Pfam" id="PF02171">
    <property type="entry name" value="Piwi"/>
    <property type="match status" value="1"/>
</dbReference>
<dbReference type="SMART" id="SM00949">
    <property type="entry name" value="PAZ"/>
    <property type="match status" value="1"/>
</dbReference>
<dbReference type="SMART" id="SM00950">
    <property type="entry name" value="Piwi"/>
    <property type="match status" value="1"/>
</dbReference>
<dbReference type="SUPFAM" id="SSF101690">
    <property type="entry name" value="PAZ domain"/>
    <property type="match status" value="1"/>
</dbReference>
<dbReference type="SUPFAM" id="SSF53098">
    <property type="entry name" value="Ribonuclease H-like"/>
    <property type="match status" value="1"/>
</dbReference>
<dbReference type="PROSITE" id="PS50821">
    <property type="entry name" value="PAZ"/>
    <property type="match status" value="1"/>
</dbReference>
<dbReference type="PROSITE" id="PS50822">
    <property type="entry name" value="PIWI"/>
    <property type="match status" value="1"/>
</dbReference>
<comment type="function">
    <text evidence="5 6 7 9">Argonaute protein required for gene silencing in the endogenous RNA interference (RNAi) pathway (PubMed:17110334, PubMed:20133583). Involved in the 26G RNAi pathway and associates with both unmethylated and methylated 26G small interfering RNAs (26G-siRNAs), which are a class of 26 nucleotide siRNAs that possess a guanine residue at the 5'-end (PubMed:22102828, PubMed:22548001). Associated 26G-siRNAs are methylated by the methyltransferase henn-1, which stabilizes the siRNAs (PubMed:22548001). Association with 26G-siRNAs is required for the biogenesis of secondary 22G-siRNAs (a class of 22 nucleotide siRNAs that possess a triphosphorylated guanine residue at the 5'-end) (PubMed:22102828). May be involved in passenger strand cleavage of target 26G-siRNAs (PubMed:22102828).</text>
</comment>
<comment type="subunit">
    <text evidence="8 10">Interacts with rde-12 (PubMed:24684931). Interacts with rde-10 (PubMed:22542102).</text>
</comment>
<comment type="subcellular location">
    <subcellularLocation>
        <location evidence="9">Cytoplasm</location>
    </subcellularLocation>
</comment>
<comment type="tissue specificity">
    <text evidence="9">Highly expressed in the germline in hermaphrodites.</text>
</comment>
<comment type="developmental stage">
    <text evidence="6 9">Expressed in embryos and during larval development up to larval stage L2 (PubMed:20133583). Highly expressed in embryos (PubMed:22548001).</text>
</comment>
<comment type="similarity">
    <text evidence="3 12">Belongs to the argonaute family. Piwi subfamily.</text>
</comment>
<name>ERGO1_CAEEL</name>
<feature type="chain" id="PRO_0000434602" description="Piwi-like protein ergo-1" evidence="11">
    <location>
        <begin position="1"/>
        <end position="1121"/>
    </location>
</feature>
<feature type="domain" description="PAZ" evidence="1">
    <location>
        <begin position="426"/>
        <end position="534"/>
    </location>
</feature>
<feature type="domain" description="Piwi" evidence="2">
    <location>
        <begin position="774"/>
        <end position="1081"/>
    </location>
</feature>
<feature type="region of interest" description="Disordered" evidence="4">
    <location>
        <begin position="1"/>
        <end position="134"/>
    </location>
</feature>
<feature type="compositionally biased region" description="Gly residues" evidence="4">
    <location>
        <begin position="1"/>
        <end position="14"/>
    </location>
</feature>
<feature type="compositionally biased region" description="Basic and acidic residues" evidence="4">
    <location>
        <begin position="15"/>
        <end position="29"/>
    </location>
</feature>
<feature type="compositionally biased region" description="Basic and acidic residues" evidence="4">
    <location>
        <begin position="40"/>
        <end position="77"/>
    </location>
</feature>
<feature type="compositionally biased region" description="Polar residues" evidence="4">
    <location>
        <begin position="99"/>
        <end position="112"/>
    </location>
</feature>
<feature type="compositionally biased region" description="Gly residues" evidence="4">
    <location>
        <begin position="125"/>
        <end position="134"/>
    </location>
</feature>
<organism evidence="13">
    <name type="scientific">Caenorhabditis elegans</name>
    <dbReference type="NCBI Taxonomy" id="6239"/>
    <lineage>
        <taxon>Eukaryota</taxon>
        <taxon>Metazoa</taxon>
        <taxon>Ecdysozoa</taxon>
        <taxon>Nematoda</taxon>
        <taxon>Chromadorea</taxon>
        <taxon>Rhabditida</taxon>
        <taxon>Rhabditina</taxon>
        <taxon>Rhabditomorpha</taxon>
        <taxon>Rhabditoidea</taxon>
        <taxon>Rhabditidae</taxon>
        <taxon>Peloderinae</taxon>
        <taxon>Caenorhabditis</taxon>
    </lineage>
</organism>
<gene>
    <name evidence="14" type="primary">ergo-1</name>
    <name evidence="14" type="ORF">R09A1.1</name>
</gene>
<keyword id="KW-0963">Cytoplasm</keyword>
<keyword id="KW-1185">Reference proteome</keyword>
<keyword id="KW-0678">Repressor</keyword>
<keyword id="KW-0943">RNA-mediated gene silencing</keyword>
<keyword id="KW-0810">Translation regulation</keyword>
<evidence type="ECO:0000255" key="1">
    <source>
        <dbReference type="PROSITE-ProRule" id="PRU00142"/>
    </source>
</evidence>
<evidence type="ECO:0000255" key="2">
    <source>
        <dbReference type="PROSITE-ProRule" id="PRU00150"/>
    </source>
</evidence>
<evidence type="ECO:0000255" key="3">
    <source>
        <dbReference type="RuleBase" id="RU361178"/>
    </source>
</evidence>
<evidence type="ECO:0000256" key="4">
    <source>
        <dbReference type="SAM" id="MobiDB-lite"/>
    </source>
</evidence>
<evidence type="ECO:0000269" key="5">
    <source>
    </source>
</evidence>
<evidence type="ECO:0000269" key="6">
    <source>
    </source>
</evidence>
<evidence type="ECO:0000269" key="7">
    <source>
    </source>
</evidence>
<evidence type="ECO:0000269" key="8">
    <source>
    </source>
</evidence>
<evidence type="ECO:0000269" key="9">
    <source>
    </source>
</evidence>
<evidence type="ECO:0000269" key="10">
    <source>
    </source>
</evidence>
<evidence type="ECO:0000305" key="11"/>
<evidence type="ECO:0000305" key="12">
    <source>
    </source>
</evidence>
<evidence type="ECO:0000312" key="13">
    <source>
        <dbReference type="Proteomes" id="UP000001940"/>
    </source>
</evidence>
<evidence type="ECO:0000312" key="14">
    <source>
        <dbReference type="WormBase" id="R09A1.1a"/>
    </source>
</evidence>
<protein>
    <recommendedName>
        <fullName evidence="3">Piwi-like protein ergo-1</fullName>
    </recommendedName>
    <alternativeName>
        <fullName evidence="14">Endogenous RNA interference deficient argonaute protein 1</fullName>
    </alternativeName>
</protein>
<accession>O61931</accession>
<proteinExistence type="evidence at protein level"/>
<sequence>MSYNNGGGGGGGGYRNDRDDRYHNNDRQNYRSSDQGRSGYNDDRRDNRYDDRRGSNNDRGCYDQHDRRGSSNDDRRGYRGYNQGGGGYQQQYSQDARYGSNQRNDNYGNNRGSHGGANMYSQNGGNRGGGGGRVGGGRTAAGMSNPGDLVGGADQPIHSVSKKSLRHNAQEFAVRPKTMVQDKGLGQKTTLLTNHTLVQLPQEPITLHVFNIEVFINGKSSNKRELCGPRFWEILKENKPTFGMPNQYIFNDVNMMWSTNKLRQSEGRTNNRRMNFVWKYVKQIKFGGNIEDEETMQLLSTLIDAIATQRARLPLAPPKYTVFKRLTYLICEEAYEPELPDVSLCHKLRIGTDARVGVSIAIRTNLRAGITACFDLGHTLFTRPAYPLVRLLCDIIEHSVVLDEAFEMKYDAALRACNVSDENLRVMTQILTKMTLQLSTETGDYVGEDGEVIVRPAPTIRNPGRNFKFVGLGAPADRYYFTSDGVELTVADYYLQKYNIRLRYPNLPCVLKKAPEQCGNKHSAMPLELVSYIVVPTRYGGFTMPDMRADMINKTTYTAQQRGKLLQHIIAQKSLSGIEPPVSNNDDYMKKHKLVMKREPIRVKATILPPPTLVYGDSVFHDEHHIGEWEAVTHDPPRQVLDGAVFRRKLYKSSEQPLMKRLMGSILLIQSPRQCRDFDYNQQGYHAIMRAIEDSGQPVLWADENKHSAVIQGELQFNQNQHGIEVIEQFLQNIKSTIGEYERDGEVIVPIVFAVFQARATVYSGNNNEYNDYNVLKYLADNKYGIHTQGILEKSLGVVGPSPKNCALTRLMVEKVLGKVGTTHRKLERGGAHKTWTIFTDPAKPTLVLGIDVSHPSTRDRETGNVLQKMSAATVVGNIDLDVTEFRASSRIQDTGVECLIDFSKEIDERIGEFIDHTGKRPAHIVVYRDGLSEGDFQKYLFEERVCIEERCLKIDTSFQPSITYIVVTKRHHTQFFLEDPSQGYESQGYNVLPGTLIEDAVTTNKYYDFFLSTQIGNEGCFRPTHYYVLHDTWTGKPDSFWPTVTHALTYNFCRSTTTVALPAPVLYAHLAAKRAKETLDGINTYKSVNNIYCDLESFGDLCEVNKDMNVNEKLEGMTFV</sequence>